<name>SYDND_SULTO</name>
<feature type="chain" id="PRO_0000111007" description="Aspartate--tRNA(Asp/Asn) ligase">
    <location>
        <begin position="1"/>
        <end position="429"/>
    </location>
</feature>
<feature type="region of interest" description="Aspartate" evidence="1">
    <location>
        <begin position="189"/>
        <end position="192"/>
    </location>
</feature>
<feature type="binding site" evidence="1">
    <location>
        <position position="167"/>
    </location>
    <ligand>
        <name>L-aspartate</name>
        <dbReference type="ChEBI" id="CHEBI:29991"/>
    </ligand>
</feature>
<feature type="binding site" evidence="1">
    <location>
        <begin position="210"/>
        <end position="212"/>
    </location>
    <ligand>
        <name>ATP</name>
        <dbReference type="ChEBI" id="CHEBI:30616"/>
    </ligand>
</feature>
<feature type="binding site" evidence="1">
    <location>
        <position position="210"/>
    </location>
    <ligand>
        <name>L-aspartate</name>
        <dbReference type="ChEBI" id="CHEBI:29991"/>
    </ligand>
</feature>
<feature type="binding site" evidence="1">
    <location>
        <position position="352"/>
    </location>
    <ligand>
        <name>ATP</name>
        <dbReference type="ChEBI" id="CHEBI:30616"/>
    </ligand>
</feature>
<feature type="binding site" evidence="1">
    <location>
        <position position="352"/>
    </location>
    <ligand>
        <name>Mg(2+)</name>
        <dbReference type="ChEBI" id="CHEBI:18420"/>
        <label>2</label>
    </ligand>
</feature>
<feature type="binding site" evidence="1">
    <location>
        <position position="352"/>
    </location>
    <ligand>
        <name>Mg(2+)</name>
        <dbReference type="ChEBI" id="CHEBI:18420"/>
        <label>3</label>
    </ligand>
</feature>
<feature type="binding site" evidence="1">
    <location>
        <position position="355"/>
    </location>
    <ligand>
        <name>L-aspartate</name>
        <dbReference type="ChEBI" id="CHEBI:29991"/>
    </ligand>
</feature>
<feature type="binding site" evidence="1">
    <location>
        <position position="355"/>
    </location>
    <ligand>
        <name>Mg(2+)</name>
        <dbReference type="ChEBI" id="CHEBI:18420"/>
        <label>2</label>
    </ligand>
</feature>
<feature type="binding site" evidence="1">
    <location>
        <position position="359"/>
    </location>
    <ligand>
        <name>L-aspartate</name>
        <dbReference type="ChEBI" id="CHEBI:29991"/>
    </ligand>
</feature>
<feature type="binding site" evidence="1">
    <location>
        <begin position="400"/>
        <end position="403"/>
    </location>
    <ligand>
        <name>ATP</name>
        <dbReference type="ChEBI" id="CHEBI:30616"/>
    </ligand>
</feature>
<feature type="site" description="Important for tRNA non-discrimination" evidence="1">
    <location>
        <position position="82"/>
    </location>
</feature>
<feature type="turn" evidence="2">
    <location>
        <begin position="7"/>
        <end position="9"/>
    </location>
</feature>
<feature type="helix" evidence="2">
    <location>
        <begin position="12"/>
        <end position="14"/>
    </location>
</feature>
<feature type="strand" evidence="2">
    <location>
        <begin position="18"/>
        <end position="31"/>
    </location>
</feature>
<feature type="strand" evidence="2">
    <location>
        <begin position="34"/>
        <end position="41"/>
    </location>
</feature>
<feature type="strand" evidence="2">
    <location>
        <begin position="44"/>
        <end position="50"/>
    </location>
</feature>
<feature type="helix" evidence="2">
    <location>
        <begin position="57"/>
        <end position="60"/>
    </location>
</feature>
<feature type="strand" evidence="2">
    <location>
        <begin position="68"/>
        <end position="77"/>
    </location>
</feature>
<feature type="strand" evidence="2">
    <location>
        <begin position="79"/>
        <end position="81"/>
    </location>
</feature>
<feature type="helix" evidence="2">
    <location>
        <begin position="82"/>
        <end position="84"/>
    </location>
</feature>
<feature type="strand" evidence="2">
    <location>
        <begin position="85"/>
        <end position="96"/>
    </location>
</feature>
<feature type="strand" evidence="2">
    <location>
        <begin position="106"/>
        <end position="108"/>
    </location>
</feature>
<feature type="helix" evidence="2">
    <location>
        <begin position="114"/>
        <end position="119"/>
    </location>
</feature>
<feature type="helix" evidence="2">
    <location>
        <begin position="121"/>
        <end position="125"/>
    </location>
</feature>
<feature type="helix" evidence="2">
    <location>
        <begin position="128"/>
        <end position="150"/>
    </location>
</feature>
<feature type="strand" evidence="2">
    <location>
        <begin position="160"/>
        <end position="164"/>
    </location>
</feature>
<feature type="strand" evidence="2">
    <location>
        <begin position="174"/>
        <end position="177"/>
    </location>
</feature>
<feature type="strand" evidence="2">
    <location>
        <begin position="180"/>
        <end position="184"/>
    </location>
</feature>
<feature type="helix" evidence="2">
    <location>
        <begin position="189"/>
        <end position="199"/>
    </location>
</feature>
<feature type="strand" evidence="2">
    <location>
        <begin position="200"/>
        <end position="209"/>
    </location>
</feature>
<feature type="strand" evidence="2">
    <location>
        <begin position="216"/>
        <end position="218"/>
    </location>
</feature>
<feature type="strand" evidence="2">
    <location>
        <begin position="221"/>
        <end position="231"/>
    </location>
</feature>
<feature type="helix" evidence="2">
    <location>
        <begin position="235"/>
        <end position="256"/>
    </location>
</feature>
<feature type="helix" evidence="2">
    <location>
        <begin position="258"/>
        <end position="264"/>
    </location>
</feature>
<feature type="strand" evidence="2">
    <location>
        <begin position="276"/>
        <end position="279"/>
    </location>
</feature>
<feature type="helix" evidence="2">
    <location>
        <begin position="280"/>
        <end position="289"/>
    </location>
</feature>
<feature type="helix" evidence="2">
    <location>
        <begin position="302"/>
        <end position="312"/>
    </location>
</feature>
<feature type="strand" evidence="2">
    <location>
        <begin position="315"/>
        <end position="320"/>
    </location>
</feature>
<feature type="helix" evidence="2">
    <location>
        <begin position="324"/>
        <end position="326"/>
    </location>
</feature>
<feature type="strand" evidence="2">
    <location>
        <begin position="340"/>
        <end position="348"/>
    </location>
</feature>
<feature type="strand" evidence="2">
    <location>
        <begin position="351"/>
        <end position="359"/>
    </location>
</feature>
<feature type="helix" evidence="2">
    <location>
        <begin position="363"/>
        <end position="372"/>
    </location>
</feature>
<feature type="helix" evidence="2">
    <location>
        <begin position="377"/>
        <end position="380"/>
    </location>
</feature>
<feature type="helix" evidence="2">
    <location>
        <begin position="381"/>
        <end position="384"/>
    </location>
</feature>
<feature type="helix" evidence="2">
    <location>
        <begin position="385"/>
        <end position="388"/>
    </location>
</feature>
<feature type="strand" evidence="2">
    <location>
        <begin position="394"/>
        <end position="400"/>
    </location>
</feature>
<feature type="helix" evidence="2">
    <location>
        <begin position="401"/>
        <end position="409"/>
    </location>
</feature>
<feature type="helix" evidence="2">
    <location>
        <begin position="414"/>
        <end position="416"/>
    </location>
</feature>
<feature type="strand" evidence="2">
    <location>
        <begin position="418"/>
        <end position="420"/>
    </location>
</feature>
<sequence>MYRSHFIADVTPEYDGKEVIWAGWVHLLRDLGGKKFIILRDKTGLGQVVVDKNSSAFGISQELTQESVIQVRGIVKADKRAPRGIELHAEEITLLSKAKAPLPLDVSGKVKADIDTRLRERVLDLRRQEMQAVIKIQSLALKAFRETLYKEGFIEIFTPKIIASATEGGAQLFPVIYFGKEAFLAQSPQLYKELMAGVVERVFEVAPAWRAEESDTPFHLAEFISMDVEMAFADYNDVMQLLEKILHNIVKTIKEEGKEELKILNYEPPEVKIPIKRLKYTEAIEILRSKGYNIKFGDDIGTPELRILNEELKEDLYFIVDWPSDARPFYTKSKSENPELSESFDLIYKFLEIVSGSTRNHKREVLEEALKKKGLKPESFEFFLKWFDYGMPPHAGFGMGLARLMVMLTGIQSVKEIVPFPRDKKRLTP</sequence>
<accession>Q976I3</accession>
<accession>F9VMP5</accession>
<keyword id="KW-0002">3D-structure</keyword>
<keyword id="KW-0030">Aminoacyl-tRNA synthetase</keyword>
<keyword id="KW-0067">ATP-binding</keyword>
<keyword id="KW-0963">Cytoplasm</keyword>
<keyword id="KW-0436">Ligase</keyword>
<keyword id="KW-0460">Magnesium</keyword>
<keyword id="KW-0479">Metal-binding</keyword>
<keyword id="KW-0547">Nucleotide-binding</keyword>
<keyword id="KW-0648">Protein biosynthesis</keyword>
<keyword id="KW-1185">Reference proteome</keyword>
<proteinExistence type="evidence at protein level"/>
<protein>
    <recommendedName>
        <fullName evidence="1">Aspartate--tRNA(Asp/Asn) ligase</fullName>
        <ecNumber evidence="1">6.1.1.23</ecNumber>
    </recommendedName>
    <alternativeName>
        <fullName evidence="1">Aspartyl-tRNA synthetase</fullName>
        <shortName evidence="1">AspRS</shortName>
    </alternativeName>
    <alternativeName>
        <fullName evidence="1">Non-discriminating aspartyl-tRNA synthetase</fullName>
        <shortName evidence="1">ND-AspRS</shortName>
    </alternativeName>
</protein>
<gene>
    <name evidence="1" type="primary">aspS</name>
    <name type="ordered locus">STK_02050</name>
</gene>
<organism>
    <name type="scientific">Sulfurisphaera tokodaii (strain DSM 16993 / JCM 10545 / NBRC 100140 / 7)</name>
    <name type="common">Sulfolobus tokodaii</name>
    <dbReference type="NCBI Taxonomy" id="273063"/>
    <lineage>
        <taxon>Archaea</taxon>
        <taxon>Thermoproteota</taxon>
        <taxon>Thermoprotei</taxon>
        <taxon>Sulfolobales</taxon>
        <taxon>Sulfolobaceae</taxon>
        <taxon>Sulfurisphaera</taxon>
    </lineage>
</organism>
<evidence type="ECO:0000255" key="1">
    <source>
        <dbReference type="HAMAP-Rule" id="MF_02075"/>
    </source>
</evidence>
<evidence type="ECO:0007829" key="2">
    <source>
        <dbReference type="PDB" id="1WYD"/>
    </source>
</evidence>
<dbReference type="EC" id="6.1.1.23" evidence="1"/>
<dbReference type="EMBL" id="BA000023">
    <property type="protein sequence ID" value="BAK54191.1"/>
    <property type="molecule type" value="Genomic_DNA"/>
</dbReference>
<dbReference type="RefSeq" id="WP_010978146.1">
    <property type="nucleotide sequence ID" value="NC_003106.2"/>
</dbReference>
<dbReference type="PDB" id="1WYD">
    <property type="method" value="X-ray"/>
    <property type="resolution" value="2.30 A"/>
    <property type="chains" value="A/B=1-429"/>
</dbReference>
<dbReference type="PDBsum" id="1WYD"/>
<dbReference type="SMR" id="Q976I3"/>
<dbReference type="STRING" id="273063.STK_02050"/>
<dbReference type="GeneID" id="1458094"/>
<dbReference type="KEGG" id="sto:STK_02050"/>
<dbReference type="PATRIC" id="fig|273063.9.peg.252"/>
<dbReference type="eggNOG" id="arCOG00406">
    <property type="taxonomic scope" value="Archaea"/>
</dbReference>
<dbReference type="OrthoDB" id="5908at2157"/>
<dbReference type="EvolutionaryTrace" id="Q976I3"/>
<dbReference type="Proteomes" id="UP000001015">
    <property type="component" value="Chromosome"/>
</dbReference>
<dbReference type="GO" id="GO:0017101">
    <property type="term" value="C:aminoacyl-tRNA synthetase multienzyme complex"/>
    <property type="evidence" value="ECO:0007669"/>
    <property type="project" value="TreeGrafter"/>
</dbReference>
<dbReference type="GO" id="GO:0005829">
    <property type="term" value="C:cytosol"/>
    <property type="evidence" value="ECO:0007669"/>
    <property type="project" value="TreeGrafter"/>
</dbReference>
<dbReference type="GO" id="GO:0004815">
    <property type="term" value="F:aspartate-tRNA ligase activity"/>
    <property type="evidence" value="ECO:0007669"/>
    <property type="project" value="UniProtKB-UniRule"/>
</dbReference>
<dbReference type="GO" id="GO:0050560">
    <property type="term" value="F:aspartate-tRNA(Asn) ligase activity"/>
    <property type="evidence" value="ECO:0007669"/>
    <property type="project" value="UniProtKB-EC"/>
</dbReference>
<dbReference type="GO" id="GO:0005524">
    <property type="term" value="F:ATP binding"/>
    <property type="evidence" value="ECO:0007669"/>
    <property type="project" value="UniProtKB-UniRule"/>
</dbReference>
<dbReference type="GO" id="GO:0000287">
    <property type="term" value="F:magnesium ion binding"/>
    <property type="evidence" value="ECO:0007669"/>
    <property type="project" value="UniProtKB-UniRule"/>
</dbReference>
<dbReference type="GO" id="GO:0003723">
    <property type="term" value="F:RNA binding"/>
    <property type="evidence" value="ECO:0007669"/>
    <property type="project" value="TreeGrafter"/>
</dbReference>
<dbReference type="GO" id="GO:0006422">
    <property type="term" value="P:aspartyl-tRNA aminoacylation"/>
    <property type="evidence" value="ECO:0007669"/>
    <property type="project" value="UniProtKB-UniRule"/>
</dbReference>
<dbReference type="CDD" id="cd00776">
    <property type="entry name" value="AsxRS_core"/>
    <property type="match status" value="1"/>
</dbReference>
<dbReference type="CDD" id="cd04316">
    <property type="entry name" value="ND_PkAspRS_like_N"/>
    <property type="match status" value="1"/>
</dbReference>
<dbReference type="FunFam" id="3.30.930.10:FF:000038">
    <property type="entry name" value="Aspartate--tRNA ligase"/>
    <property type="match status" value="1"/>
</dbReference>
<dbReference type="Gene3D" id="3.30.930.10">
    <property type="entry name" value="Bira Bifunctional Protein, Domain 2"/>
    <property type="match status" value="1"/>
</dbReference>
<dbReference type="Gene3D" id="2.40.50.140">
    <property type="entry name" value="Nucleic acid-binding proteins"/>
    <property type="match status" value="1"/>
</dbReference>
<dbReference type="HAMAP" id="MF_02075">
    <property type="entry name" value="Asp_tRNA_synth_type2"/>
    <property type="match status" value="1"/>
</dbReference>
<dbReference type="InterPro" id="IPR004364">
    <property type="entry name" value="Aa-tRNA-synt_II"/>
</dbReference>
<dbReference type="InterPro" id="IPR006195">
    <property type="entry name" value="aa-tRNA-synth_II"/>
</dbReference>
<dbReference type="InterPro" id="IPR045864">
    <property type="entry name" value="aa-tRNA-synth_II/BPL/LPL"/>
</dbReference>
<dbReference type="InterPro" id="IPR004523">
    <property type="entry name" value="Asp-tRNA_synthase_2"/>
</dbReference>
<dbReference type="InterPro" id="IPR002312">
    <property type="entry name" value="Asp/Asn-tRNA-synth_IIb"/>
</dbReference>
<dbReference type="InterPro" id="IPR012340">
    <property type="entry name" value="NA-bd_OB-fold"/>
</dbReference>
<dbReference type="InterPro" id="IPR004365">
    <property type="entry name" value="NA-bd_OB_tRNA"/>
</dbReference>
<dbReference type="NCBIfam" id="TIGR00458">
    <property type="entry name" value="aspS_nondisc"/>
    <property type="match status" value="1"/>
</dbReference>
<dbReference type="NCBIfam" id="NF003483">
    <property type="entry name" value="PRK05159.1"/>
    <property type="match status" value="1"/>
</dbReference>
<dbReference type="PANTHER" id="PTHR43450:SF1">
    <property type="entry name" value="ASPARTATE--TRNA LIGASE, CYTOPLASMIC"/>
    <property type="match status" value="1"/>
</dbReference>
<dbReference type="PANTHER" id="PTHR43450">
    <property type="entry name" value="ASPARTYL-TRNA SYNTHETASE"/>
    <property type="match status" value="1"/>
</dbReference>
<dbReference type="Pfam" id="PF00152">
    <property type="entry name" value="tRNA-synt_2"/>
    <property type="match status" value="1"/>
</dbReference>
<dbReference type="Pfam" id="PF01336">
    <property type="entry name" value="tRNA_anti-codon"/>
    <property type="match status" value="1"/>
</dbReference>
<dbReference type="PRINTS" id="PR01042">
    <property type="entry name" value="TRNASYNTHASP"/>
</dbReference>
<dbReference type="SUPFAM" id="SSF55681">
    <property type="entry name" value="Class II aaRS and biotin synthetases"/>
    <property type="match status" value="1"/>
</dbReference>
<dbReference type="SUPFAM" id="SSF50249">
    <property type="entry name" value="Nucleic acid-binding proteins"/>
    <property type="match status" value="1"/>
</dbReference>
<dbReference type="PROSITE" id="PS50862">
    <property type="entry name" value="AA_TRNA_LIGASE_II"/>
    <property type="match status" value="1"/>
</dbReference>
<reference key="1">
    <citation type="journal article" date="2001" name="DNA Res.">
        <title>Complete genome sequence of an aerobic thermoacidophilic Crenarchaeon, Sulfolobus tokodaii strain7.</title>
        <authorList>
            <person name="Kawarabayasi Y."/>
            <person name="Hino Y."/>
            <person name="Horikawa H."/>
            <person name="Jin-no K."/>
            <person name="Takahashi M."/>
            <person name="Sekine M."/>
            <person name="Baba S."/>
            <person name="Ankai A."/>
            <person name="Kosugi H."/>
            <person name="Hosoyama A."/>
            <person name="Fukui S."/>
            <person name="Nagai Y."/>
            <person name="Nishijima K."/>
            <person name="Otsuka R."/>
            <person name="Nakazawa H."/>
            <person name="Takamiya M."/>
            <person name="Kato Y."/>
            <person name="Yoshizawa T."/>
            <person name="Tanaka T."/>
            <person name="Kudoh Y."/>
            <person name="Yamazaki J."/>
            <person name="Kushida N."/>
            <person name="Oguchi A."/>
            <person name="Aoki K."/>
            <person name="Masuda S."/>
            <person name="Yanagii M."/>
            <person name="Nishimura M."/>
            <person name="Yamagishi A."/>
            <person name="Oshima T."/>
            <person name="Kikuchi H."/>
        </authorList>
    </citation>
    <scope>NUCLEOTIDE SEQUENCE [LARGE SCALE GENOMIC DNA]</scope>
    <source>
        <strain>DSM 16993 / JCM 10545 / NBRC 100140 / 7</strain>
    </source>
</reference>
<comment type="function">
    <text evidence="1">Aspartyl-tRNA synthetase with relaxed tRNA specificity since it is able to aspartylate not only its cognate tRNA(Asp) but also tRNA(Asn). Reaction proceeds in two steps: L-aspartate is first activated by ATP to form Asp-AMP and then transferred to the acceptor end of tRNA(Asp/Asn).</text>
</comment>
<comment type="catalytic activity">
    <reaction evidence="1">
        <text>tRNA(Asx) + L-aspartate + ATP = L-aspartyl-tRNA(Asx) + AMP + diphosphate</text>
        <dbReference type="Rhea" id="RHEA:18349"/>
        <dbReference type="Rhea" id="RHEA-COMP:9710"/>
        <dbReference type="Rhea" id="RHEA-COMP:9711"/>
        <dbReference type="ChEBI" id="CHEBI:29991"/>
        <dbReference type="ChEBI" id="CHEBI:30616"/>
        <dbReference type="ChEBI" id="CHEBI:33019"/>
        <dbReference type="ChEBI" id="CHEBI:78442"/>
        <dbReference type="ChEBI" id="CHEBI:78516"/>
        <dbReference type="ChEBI" id="CHEBI:456215"/>
        <dbReference type="EC" id="6.1.1.23"/>
    </reaction>
</comment>
<comment type="cofactor">
    <cofactor evidence="1">
        <name>Mg(2+)</name>
        <dbReference type="ChEBI" id="CHEBI:18420"/>
    </cofactor>
    <text evidence="1">Binds 3 Mg(2+) cations per subunit. The strongest magnesium site (Mg1) is bound to the beta- and gamma-phosphates of ATP and four water molecules complete its coordination sphere.</text>
</comment>
<comment type="subunit">
    <text evidence="1">Homodimer.</text>
</comment>
<comment type="subcellular location">
    <subcellularLocation>
        <location evidence="1">Cytoplasm</location>
    </subcellularLocation>
</comment>
<comment type="similarity">
    <text evidence="1">Belongs to the class-II aminoacyl-tRNA synthetase family. Type 2 subfamily.</text>
</comment>